<sequence>MQQRRKSVFASAPFAMKQAALGAGVAARRNGAPLSLAAVVFALFVFATFLYNEDIKSIADFPFGAGALRAKSPDLHVLQETVGAAHLAAGSIAKRGEEVIVRVLDAPASTAMAAAAGSSSNNSTIEVAKANANANANAADAGVKVDEGQERERDVTLPSVKEGGADEARRREDEEAAEKESSAKAAAATAALRTVVSVPDTCDLYRGNWVYDEVNAPVYKESQCEFLTEQVTCMRNGRRDDSYQKWRWQPTDCDLPRFDARLLLERLRNKRLMFVGDSLNRNQWESMVCLVQSVIPKGKKTLTKFVNGGNSNIFYAHEYNATVEFYWAPFLVESNSDNPQVHSVPDRVIQWHSIAKHAHNWLGVDYLIFNTYIWWLNTLDMKVLKGSFDQGATEYVEVDRPVAYKEVLKTWAKWVDRNIDPNRTTVFFMSMSPNHITPEAWGNYGGIKCAMETLPITNRTTSLDVGTDWRLYAGAQEVLQTFRRVPVHLVDITALSELRKDAHTSVHTLRQGKLLTPEQQSDPKTYADCIHWCLPGLPDTWNQFLYARIASAPWSSDQ</sequence>
<name>XOAT6_ORYSJ</name>
<accession>Q10MX2</accession>
<accession>Q0DSS4</accession>
<protein>
    <recommendedName>
        <fullName evidence="8">Xylan O-acetyltransferase 6</fullName>
        <ecNumber evidence="6">2.3.1.-</ecNumber>
    </recommendedName>
    <alternativeName>
        <fullName evidence="7">Protein trichome birefringence-like 15</fullName>
        <shortName evidence="7">OsTBL15</shortName>
    </alternativeName>
</protein>
<feature type="chain" id="PRO_0000454030" description="Xylan O-acetyltransferase 6">
    <location>
        <begin position="1"/>
        <end position="558"/>
    </location>
</feature>
<feature type="topological domain" description="Cytoplasmic" evidence="9">
    <location>
        <begin position="1"/>
        <end position="30"/>
    </location>
</feature>
<feature type="transmembrane region" description="Helical; Signal-anchor for type II membrane protein" evidence="3">
    <location>
        <begin position="31"/>
        <end position="51"/>
    </location>
</feature>
<feature type="topological domain" description="Lumenal" evidence="9">
    <location>
        <begin position="52"/>
        <end position="558"/>
    </location>
</feature>
<feature type="region of interest" description="Disordered" evidence="5">
    <location>
        <begin position="140"/>
        <end position="184"/>
    </location>
</feature>
<feature type="short sequence motif" description="GDS motif" evidence="10">
    <location>
        <begin position="276"/>
        <end position="278"/>
    </location>
</feature>
<feature type="short sequence motif" description="DXXH motif" evidence="10">
    <location>
        <begin position="528"/>
        <end position="531"/>
    </location>
</feature>
<feature type="compositionally biased region" description="Basic and acidic residues" evidence="5">
    <location>
        <begin position="143"/>
        <end position="155"/>
    </location>
</feature>
<feature type="compositionally biased region" description="Basic and acidic residues" evidence="5">
    <location>
        <begin position="163"/>
        <end position="182"/>
    </location>
</feature>
<feature type="active site" description="Nucleophile" evidence="2">
    <location>
        <position position="278"/>
    </location>
</feature>
<feature type="active site" description="Proton donor" evidence="2">
    <location>
        <position position="528"/>
    </location>
</feature>
<feature type="active site" description="Proton acceptor" evidence="2">
    <location>
        <position position="531"/>
    </location>
</feature>
<feature type="glycosylation site" description="N-linked (GlcNAc...) asparagine" evidence="4">
    <location>
        <position position="122"/>
    </location>
</feature>
<feature type="glycosylation site" description="N-linked (GlcNAc...) asparagine" evidence="4">
    <location>
        <position position="320"/>
    </location>
</feature>
<feature type="glycosylation site" description="N-linked (GlcNAc...) asparagine" evidence="4">
    <location>
        <position position="422"/>
    </location>
</feature>
<feature type="glycosylation site" description="N-linked (GlcNAc...) asparagine" evidence="4">
    <location>
        <position position="458"/>
    </location>
</feature>
<feature type="disulfide bond" evidence="2">
    <location>
        <begin position="202"/>
        <end position="253"/>
    </location>
</feature>
<feature type="disulfide bond" evidence="2">
    <location>
        <begin position="224"/>
        <end position="289"/>
    </location>
</feature>
<feature type="disulfide bond" evidence="2">
    <location>
        <begin position="233"/>
        <end position="533"/>
    </location>
</feature>
<feature type="disulfide bond" evidence="2">
    <location>
        <begin position="449"/>
        <end position="529"/>
    </location>
</feature>
<dbReference type="EC" id="2.3.1.-" evidence="6"/>
<dbReference type="EMBL" id="MH037020">
    <property type="protein sequence ID" value="AVR54510.1"/>
    <property type="molecule type" value="mRNA"/>
</dbReference>
<dbReference type="EMBL" id="DP000009">
    <property type="protein sequence ID" value="ABF95402.1"/>
    <property type="molecule type" value="Genomic_DNA"/>
</dbReference>
<dbReference type="EMBL" id="AP008209">
    <property type="protein sequence ID" value="BAF11714.1"/>
    <property type="status" value="ALT_INIT"/>
    <property type="molecule type" value="Genomic_DNA"/>
</dbReference>
<dbReference type="EMBL" id="AP014959">
    <property type="protein sequence ID" value="BAS83675.1"/>
    <property type="molecule type" value="Genomic_DNA"/>
</dbReference>
<dbReference type="RefSeq" id="XP_015632171.1">
    <property type="nucleotide sequence ID" value="XM_015776685.1"/>
</dbReference>
<dbReference type="SMR" id="Q10MX2"/>
<dbReference type="FunCoup" id="Q10MX2">
    <property type="interactions" value="28"/>
</dbReference>
<dbReference type="STRING" id="39947.Q10MX2"/>
<dbReference type="GlyCosmos" id="Q10MX2">
    <property type="glycosylation" value="4 sites, No reported glycans"/>
</dbReference>
<dbReference type="PaxDb" id="39947-Q10MX2"/>
<dbReference type="EnsemblPlants" id="Os03t0291800-01">
    <property type="protein sequence ID" value="Os03t0291800-01"/>
    <property type="gene ID" value="Os03g0291800"/>
</dbReference>
<dbReference type="Gramene" id="Os03t0291800-01">
    <property type="protein sequence ID" value="Os03t0291800-01"/>
    <property type="gene ID" value="Os03g0291800"/>
</dbReference>
<dbReference type="KEGG" id="dosa:Os03g0291800"/>
<dbReference type="eggNOG" id="ENOG502QUBK">
    <property type="taxonomic scope" value="Eukaryota"/>
</dbReference>
<dbReference type="HOGENOM" id="CLU_020953_3_2_1"/>
<dbReference type="InParanoid" id="Q10MX2"/>
<dbReference type="OMA" id="CAMETMP"/>
<dbReference type="OrthoDB" id="1932925at2759"/>
<dbReference type="Proteomes" id="UP000000763">
    <property type="component" value="Chromosome 3"/>
</dbReference>
<dbReference type="Proteomes" id="UP000059680">
    <property type="component" value="Chromosome 3"/>
</dbReference>
<dbReference type="ExpressionAtlas" id="Q10MX2">
    <property type="expression patterns" value="baseline and differential"/>
</dbReference>
<dbReference type="GO" id="GO:0005794">
    <property type="term" value="C:Golgi apparatus"/>
    <property type="evidence" value="ECO:0000318"/>
    <property type="project" value="GO_Central"/>
</dbReference>
<dbReference type="GO" id="GO:0000139">
    <property type="term" value="C:Golgi membrane"/>
    <property type="evidence" value="ECO:0000250"/>
    <property type="project" value="UniProtKB"/>
</dbReference>
<dbReference type="GO" id="GO:0016413">
    <property type="term" value="F:O-acetyltransferase activity"/>
    <property type="evidence" value="ECO:0000318"/>
    <property type="project" value="GO_Central"/>
</dbReference>
<dbReference type="GO" id="GO:1990538">
    <property type="term" value="F:xylan O-acetyltransferase activity"/>
    <property type="evidence" value="ECO:0000314"/>
    <property type="project" value="UniProtKB"/>
</dbReference>
<dbReference type="GO" id="GO:1990937">
    <property type="term" value="P:xylan acetylation"/>
    <property type="evidence" value="ECO:0000314"/>
    <property type="project" value="UniProtKB"/>
</dbReference>
<dbReference type="InterPro" id="IPR029962">
    <property type="entry name" value="TBL"/>
</dbReference>
<dbReference type="InterPro" id="IPR026057">
    <property type="entry name" value="TBL_C"/>
</dbReference>
<dbReference type="InterPro" id="IPR025846">
    <property type="entry name" value="TBL_N"/>
</dbReference>
<dbReference type="PANTHER" id="PTHR32285">
    <property type="entry name" value="PROTEIN TRICHOME BIREFRINGENCE-LIKE 9-RELATED"/>
    <property type="match status" value="1"/>
</dbReference>
<dbReference type="PANTHER" id="PTHR32285:SF276">
    <property type="entry name" value="XYLAN O-ACETYLTRANSFERASE 6"/>
    <property type="match status" value="1"/>
</dbReference>
<dbReference type="Pfam" id="PF13839">
    <property type="entry name" value="PC-Esterase"/>
    <property type="match status" value="1"/>
</dbReference>
<dbReference type="Pfam" id="PF14416">
    <property type="entry name" value="PMR5N"/>
    <property type="match status" value="1"/>
</dbReference>
<organism>
    <name type="scientific">Oryza sativa subsp. japonica</name>
    <name type="common">Rice</name>
    <dbReference type="NCBI Taxonomy" id="39947"/>
    <lineage>
        <taxon>Eukaryota</taxon>
        <taxon>Viridiplantae</taxon>
        <taxon>Streptophyta</taxon>
        <taxon>Embryophyta</taxon>
        <taxon>Tracheophyta</taxon>
        <taxon>Spermatophyta</taxon>
        <taxon>Magnoliopsida</taxon>
        <taxon>Liliopsida</taxon>
        <taxon>Poales</taxon>
        <taxon>Poaceae</taxon>
        <taxon>BOP clade</taxon>
        <taxon>Oryzoideae</taxon>
        <taxon>Oryzeae</taxon>
        <taxon>Oryzinae</taxon>
        <taxon>Oryza</taxon>
        <taxon>Oryza sativa</taxon>
    </lineage>
</organism>
<comment type="function">
    <text evidence="2 6">Xylan acetyltransferase required for 2-O- and 3-O-monoacetylation of xylosyl residues in xylan (PubMed:29569182). Catalyzes the 2-O-acetylation of xylan, followed by nonenzymatic acetyl migration to the O-3 position, resulting in products that are monoacetylated at both O-2 and O-3 positions (By similarity).</text>
</comment>
<comment type="biophysicochemical properties">
    <kinetics>
        <KM evidence="6">35 uM for xylohexaose</KM>
        <Vmax evidence="6">14.4 pmol/min/mg enzyme with xylohexaose as substrate</Vmax>
    </kinetics>
</comment>
<comment type="subcellular location">
    <subcellularLocation>
        <location evidence="1">Golgi apparatus membrane</location>
        <topology evidence="3">Single-pass type II membrane protein</topology>
    </subcellularLocation>
</comment>
<comment type="tissue specificity">
    <text evidence="6">Expressed in leaves.</text>
</comment>
<comment type="similarity">
    <text evidence="9">Belongs to the PC-esterase family. TBL subfamily.</text>
</comment>
<comment type="sequence caution" evidence="9">
    <conflict type="erroneous initiation">
        <sequence resource="EMBL-CDS" id="BAF11714"/>
    </conflict>
    <text>Extended N-terminus.</text>
</comment>
<gene>
    <name evidence="8" type="primary">XOAT6</name>
    <name evidence="7" type="synonym">TBL15</name>
    <name evidence="12" type="ordered locus">Os03g0291800</name>
    <name evidence="11" type="ordered locus">LOC_Os03g18140</name>
</gene>
<keyword id="KW-1015">Disulfide bond</keyword>
<keyword id="KW-0325">Glycoprotein</keyword>
<keyword id="KW-0333">Golgi apparatus</keyword>
<keyword id="KW-0472">Membrane</keyword>
<keyword id="KW-1185">Reference proteome</keyword>
<keyword id="KW-0735">Signal-anchor</keyword>
<keyword id="KW-0808">Transferase</keyword>
<keyword id="KW-0812">Transmembrane</keyword>
<keyword id="KW-1133">Transmembrane helix</keyword>
<evidence type="ECO:0000250" key="1">
    <source>
        <dbReference type="UniProtKB" id="Q2QYU2"/>
    </source>
</evidence>
<evidence type="ECO:0000250" key="2">
    <source>
        <dbReference type="UniProtKB" id="Q9LY46"/>
    </source>
</evidence>
<evidence type="ECO:0000255" key="3"/>
<evidence type="ECO:0000255" key="4">
    <source>
        <dbReference type="PROSITE-ProRule" id="PRU00498"/>
    </source>
</evidence>
<evidence type="ECO:0000256" key="5">
    <source>
        <dbReference type="SAM" id="MobiDB-lite"/>
    </source>
</evidence>
<evidence type="ECO:0000269" key="6">
    <source>
    </source>
</evidence>
<evidence type="ECO:0000303" key="7">
    <source>
    </source>
</evidence>
<evidence type="ECO:0000303" key="8">
    <source>
    </source>
</evidence>
<evidence type="ECO:0000305" key="9"/>
<evidence type="ECO:0000305" key="10">
    <source>
    </source>
</evidence>
<evidence type="ECO:0000312" key="11">
    <source>
        <dbReference type="EMBL" id="ABF95402.1"/>
    </source>
</evidence>
<evidence type="ECO:0000312" key="12">
    <source>
        <dbReference type="EMBL" id="BAS83675.1"/>
    </source>
</evidence>
<reference key="1">
    <citation type="journal article" date="2018" name="Planta">
        <title>Biochemical characterization of rice xylan O-acetyltransferases.</title>
        <authorList>
            <person name="Zhong R."/>
            <person name="Cui D."/>
            <person name="Dasher R.L."/>
            <person name="Ye Z.H."/>
        </authorList>
    </citation>
    <scope>NUCLEOTIDE SEQUENCE [MRNA]</scope>
    <scope>FUNCTION</scope>
    <scope>CATALYTIC ACTIVITY</scope>
    <scope>BIOPHYSICOCHEMICAL PROPERTIES</scope>
    <scope>TISSUE SPECIFICITY</scope>
</reference>
<reference key="2">
    <citation type="journal article" date="2005" name="Genome Res.">
        <title>Sequence, annotation, and analysis of synteny between rice chromosome 3 and diverged grass species.</title>
        <authorList>
            <consortium name="The rice chromosome 3 sequencing consortium"/>
            <person name="Buell C.R."/>
            <person name="Yuan Q."/>
            <person name="Ouyang S."/>
            <person name="Liu J."/>
            <person name="Zhu W."/>
            <person name="Wang A."/>
            <person name="Maiti R."/>
            <person name="Haas B."/>
            <person name="Wortman J."/>
            <person name="Pertea M."/>
            <person name="Jones K.M."/>
            <person name="Kim M."/>
            <person name="Overton L."/>
            <person name="Tsitrin T."/>
            <person name="Fadrosh D."/>
            <person name="Bera J."/>
            <person name="Weaver B."/>
            <person name="Jin S."/>
            <person name="Johri S."/>
            <person name="Reardon M."/>
            <person name="Webb K."/>
            <person name="Hill J."/>
            <person name="Moffat K."/>
            <person name="Tallon L."/>
            <person name="Van Aken S."/>
            <person name="Lewis M."/>
            <person name="Utterback T."/>
            <person name="Feldblyum T."/>
            <person name="Zismann V."/>
            <person name="Iobst S."/>
            <person name="Hsiao J."/>
            <person name="de Vazeille A.R."/>
            <person name="Salzberg S.L."/>
            <person name="White O."/>
            <person name="Fraser C.M."/>
            <person name="Yu Y."/>
            <person name="Kim H."/>
            <person name="Rambo T."/>
            <person name="Currie J."/>
            <person name="Collura K."/>
            <person name="Kernodle-Thompson S."/>
            <person name="Wei F."/>
            <person name="Kudrna K."/>
            <person name="Ammiraju J.S.S."/>
            <person name="Luo M."/>
            <person name="Goicoechea J.L."/>
            <person name="Wing R.A."/>
            <person name="Henry D."/>
            <person name="Oates R."/>
            <person name="Palmer M."/>
            <person name="Pries G."/>
            <person name="Saski C."/>
            <person name="Simmons J."/>
            <person name="Soderlund C."/>
            <person name="Nelson W."/>
            <person name="de la Bastide M."/>
            <person name="Spiegel L."/>
            <person name="Nascimento L."/>
            <person name="Huang E."/>
            <person name="Preston R."/>
            <person name="Zutavern T."/>
            <person name="Palmer L."/>
            <person name="O'Shaughnessy A."/>
            <person name="Dike S."/>
            <person name="McCombie W.R."/>
            <person name="Minx P."/>
            <person name="Cordum H."/>
            <person name="Wilson R."/>
            <person name="Jin W."/>
            <person name="Lee H.R."/>
            <person name="Jiang J."/>
            <person name="Jackson S."/>
        </authorList>
    </citation>
    <scope>NUCLEOTIDE SEQUENCE [LARGE SCALE GENOMIC DNA]</scope>
    <source>
        <strain>cv. Nipponbare</strain>
    </source>
</reference>
<reference key="3">
    <citation type="journal article" date="2005" name="Nature">
        <title>The map-based sequence of the rice genome.</title>
        <authorList>
            <consortium name="International rice genome sequencing project (IRGSP)"/>
        </authorList>
    </citation>
    <scope>NUCLEOTIDE SEQUENCE [LARGE SCALE GENOMIC DNA]</scope>
    <source>
        <strain>cv. Nipponbare</strain>
    </source>
</reference>
<reference key="4">
    <citation type="journal article" date="2008" name="Nucleic Acids Res.">
        <title>The rice annotation project database (RAP-DB): 2008 update.</title>
        <authorList>
            <consortium name="The rice annotation project (RAP)"/>
        </authorList>
    </citation>
    <scope>GENOME REANNOTATION</scope>
    <source>
        <strain>cv. Nipponbare</strain>
    </source>
</reference>
<reference key="5">
    <citation type="journal article" date="2013" name="Rice">
        <title>Improvement of the Oryza sativa Nipponbare reference genome using next generation sequence and optical map data.</title>
        <authorList>
            <person name="Kawahara Y."/>
            <person name="de la Bastide M."/>
            <person name="Hamilton J.P."/>
            <person name="Kanamori H."/>
            <person name="McCombie W.R."/>
            <person name="Ouyang S."/>
            <person name="Schwartz D.C."/>
            <person name="Tanaka T."/>
            <person name="Wu J."/>
            <person name="Zhou S."/>
            <person name="Childs K.L."/>
            <person name="Davidson R.M."/>
            <person name="Lin H."/>
            <person name="Quesada-Ocampo L."/>
            <person name="Vaillancourt B."/>
            <person name="Sakai H."/>
            <person name="Lee S.S."/>
            <person name="Kim J."/>
            <person name="Numa H."/>
            <person name="Itoh T."/>
            <person name="Buell C.R."/>
            <person name="Matsumoto T."/>
        </authorList>
    </citation>
    <scope>GENOME REANNOTATION</scope>
    <source>
        <strain>cv. Nipponbare</strain>
    </source>
</reference>
<reference key="6">
    <citation type="journal article" date="2017" name="Plant Physiol.">
        <title>Two trichome birefringence-like proteins mediate xylan acetylation, which is essential for leaf blight resistance in rice.</title>
        <authorList>
            <person name="Gao Y."/>
            <person name="He C."/>
            <person name="Zhang D."/>
            <person name="Liu X."/>
            <person name="Xu Z."/>
            <person name="Tian Y."/>
            <person name="Liu X.H."/>
            <person name="Zang S."/>
            <person name="Pauly M."/>
            <person name="Zhou Y."/>
            <person name="Zhang B."/>
        </authorList>
    </citation>
    <scope>GENE FAMILY</scope>
    <scope>NOMENCLATURE</scope>
</reference>
<proteinExistence type="evidence at protein level"/>